<name>ANMK2_JANSC</name>
<organism>
    <name type="scientific">Jannaschia sp. (strain CCS1)</name>
    <dbReference type="NCBI Taxonomy" id="290400"/>
    <lineage>
        <taxon>Bacteria</taxon>
        <taxon>Pseudomonadati</taxon>
        <taxon>Pseudomonadota</taxon>
        <taxon>Alphaproteobacteria</taxon>
        <taxon>Rhodobacterales</taxon>
        <taxon>Roseobacteraceae</taxon>
        <taxon>Jannaschia</taxon>
    </lineage>
</organism>
<sequence>MAHDMRWCVGLMTGTVLDGNIDVALLQTDGERIGAFGPHALYPYDAGTNALLKQCLSAAQTWAFNGPEPAIFAEAEARITRAQSDAVACLVETAGLSMRDIAAVGFHGQTVLHRAPAPGRLGQTRQLGNGQDMARRLATDVVYDFRSADMKAGGQGAPLSAIYHSALLDTLDNAHDTAILNLGGVANITARDARGMLAAFDTGPANAPINDFVVHRGLGEMDRDGQLAAQGRVDDARFSTALRHPYLSRPYPKSLDRFDFGHDWVADLSDADGAATLTAFTASAVGRGLDLLPVRPTRLIVCGGGRRNPTLLKMIATYAKVHVDNAEDWGWEGDATEAQCFGYLAMRRLRDLPVTFAETTGVRAPMPAGRIAHGSSPG</sequence>
<accession>Q28KN6</accession>
<feature type="chain" id="PRO_0000250007" description="Anhydro-N-acetylmuramic acid kinase 2">
    <location>
        <begin position="1"/>
        <end position="378"/>
    </location>
</feature>
<feature type="binding site" evidence="1">
    <location>
        <begin position="14"/>
        <end position="22"/>
    </location>
    <ligand>
        <name>ATP</name>
        <dbReference type="ChEBI" id="CHEBI:30616"/>
    </ligand>
</feature>
<keyword id="KW-0067">ATP-binding</keyword>
<keyword id="KW-0119">Carbohydrate metabolism</keyword>
<keyword id="KW-0418">Kinase</keyword>
<keyword id="KW-0547">Nucleotide-binding</keyword>
<keyword id="KW-1185">Reference proteome</keyword>
<keyword id="KW-0808">Transferase</keyword>
<evidence type="ECO:0000255" key="1">
    <source>
        <dbReference type="HAMAP-Rule" id="MF_01270"/>
    </source>
</evidence>
<reference key="1">
    <citation type="submission" date="2006-02" db="EMBL/GenBank/DDBJ databases">
        <title>Complete sequence of chromosome of Jannaschia sp. CCS1.</title>
        <authorList>
            <consortium name="US DOE Joint Genome Institute"/>
            <person name="Copeland A."/>
            <person name="Lucas S."/>
            <person name="Lapidus A."/>
            <person name="Barry K."/>
            <person name="Detter J.C."/>
            <person name="Glavina del Rio T."/>
            <person name="Hammon N."/>
            <person name="Israni S."/>
            <person name="Pitluck S."/>
            <person name="Brettin T."/>
            <person name="Bruce D."/>
            <person name="Han C."/>
            <person name="Tapia R."/>
            <person name="Gilna P."/>
            <person name="Chertkov O."/>
            <person name="Saunders E."/>
            <person name="Schmutz J."/>
            <person name="Larimer F."/>
            <person name="Land M."/>
            <person name="Kyrpides N."/>
            <person name="Lykidis A."/>
            <person name="Moran M.A."/>
            <person name="Belas R."/>
            <person name="Ye W."/>
            <person name="Buchan A."/>
            <person name="Gonzalez J.M."/>
            <person name="Schell M.A."/>
            <person name="Richardson P."/>
        </authorList>
    </citation>
    <scope>NUCLEOTIDE SEQUENCE [LARGE SCALE GENOMIC DNA]</scope>
    <source>
        <strain>CCS1</strain>
    </source>
</reference>
<comment type="function">
    <text evidence="1">Catalyzes the specific phosphorylation of 1,6-anhydro-N-acetylmuramic acid (anhMurNAc) with the simultaneous cleavage of the 1,6-anhydro ring, generating MurNAc-6-P. Is required for the utilization of anhMurNAc either imported from the medium or derived from its own cell wall murein, and thus plays a role in cell wall recycling.</text>
</comment>
<comment type="catalytic activity">
    <reaction evidence="1">
        <text>1,6-anhydro-N-acetyl-beta-muramate + ATP + H2O = N-acetyl-D-muramate 6-phosphate + ADP + H(+)</text>
        <dbReference type="Rhea" id="RHEA:24952"/>
        <dbReference type="ChEBI" id="CHEBI:15377"/>
        <dbReference type="ChEBI" id="CHEBI:15378"/>
        <dbReference type="ChEBI" id="CHEBI:30616"/>
        <dbReference type="ChEBI" id="CHEBI:58690"/>
        <dbReference type="ChEBI" id="CHEBI:58722"/>
        <dbReference type="ChEBI" id="CHEBI:456216"/>
        <dbReference type="EC" id="2.7.1.170"/>
    </reaction>
</comment>
<comment type="pathway">
    <text evidence="1">Amino-sugar metabolism; 1,6-anhydro-N-acetylmuramate degradation.</text>
</comment>
<comment type="pathway">
    <text evidence="1">Cell wall biogenesis; peptidoglycan recycling.</text>
</comment>
<comment type="similarity">
    <text evidence="1">Belongs to the anhydro-N-acetylmuramic acid kinase family.</text>
</comment>
<protein>
    <recommendedName>
        <fullName evidence="1">Anhydro-N-acetylmuramic acid kinase 2</fullName>
        <ecNumber evidence="1">2.7.1.170</ecNumber>
    </recommendedName>
    <alternativeName>
        <fullName evidence="1">AnhMurNAc kinase 2</fullName>
    </alternativeName>
</protein>
<dbReference type="EC" id="2.7.1.170" evidence="1"/>
<dbReference type="EMBL" id="CP000264">
    <property type="protein sequence ID" value="ABD56726.1"/>
    <property type="molecule type" value="Genomic_DNA"/>
</dbReference>
<dbReference type="SMR" id="Q28KN6"/>
<dbReference type="STRING" id="290400.Jann_3809"/>
<dbReference type="KEGG" id="jan:Jann_3809"/>
<dbReference type="eggNOG" id="COG2377">
    <property type="taxonomic scope" value="Bacteria"/>
</dbReference>
<dbReference type="HOGENOM" id="CLU_038782_3_0_5"/>
<dbReference type="UniPathway" id="UPA00343"/>
<dbReference type="UniPathway" id="UPA00544"/>
<dbReference type="Proteomes" id="UP000008326">
    <property type="component" value="Chromosome"/>
</dbReference>
<dbReference type="GO" id="GO:0005524">
    <property type="term" value="F:ATP binding"/>
    <property type="evidence" value="ECO:0007669"/>
    <property type="project" value="UniProtKB-UniRule"/>
</dbReference>
<dbReference type="GO" id="GO:0016301">
    <property type="term" value="F:kinase activity"/>
    <property type="evidence" value="ECO:0007669"/>
    <property type="project" value="UniProtKB-KW"/>
</dbReference>
<dbReference type="GO" id="GO:0016773">
    <property type="term" value="F:phosphotransferase activity, alcohol group as acceptor"/>
    <property type="evidence" value="ECO:0007669"/>
    <property type="project" value="UniProtKB-UniRule"/>
</dbReference>
<dbReference type="GO" id="GO:0097175">
    <property type="term" value="P:1,6-anhydro-N-acetyl-beta-muramic acid catabolic process"/>
    <property type="evidence" value="ECO:0007669"/>
    <property type="project" value="UniProtKB-UniRule"/>
</dbReference>
<dbReference type="GO" id="GO:0006040">
    <property type="term" value="P:amino sugar metabolic process"/>
    <property type="evidence" value="ECO:0007669"/>
    <property type="project" value="InterPro"/>
</dbReference>
<dbReference type="GO" id="GO:0009254">
    <property type="term" value="P:peptidoglycan turnover"/>
    <property type="evidence" value="ECO:0007669"/>
    <property type="project" value="UniProtKB-UniRule"/>
</dbReference>
<dbReference type="Gene3D" id="3.30.420.40">
    <property type="match status" value="2"/>
</dbReference>
<dbReference type="HAMAP" id="MF_01270">
    <property type="entry name" value="AnhMurNAc_kinase"/>
    <property type="match status" value="1"/>
</dbReference>
<dbReference type="InterPro" id="IPR005338">
    <property type="entry name" value="Anhydro_N_Ac-Mur_kinase"/>
</dbReference>
<dbReference type="InterPro" id="IPR043129">
    <property type="entry name" value="ATPase_NBD"/>
</dbReference>
<dbReference type="NCBIfam" id="NF007141">
    <property type="entry name" value="PRK09585.1-5"/>
    <property type="match status" value="1"/>
</dbReference>
<dbReference type="PANTHER" id="PTHR30605">
    <property type="entry name" value="ANHYDRO-N-ACETYLMURAMIC ACID KINASE"/>
    <property type="match status" value="1"/>
</dbReference>
<dbReference type="PANTHER" id="PTHR30605:SF0">
    <property type="entry name" value="ANHYDRO-N-ACETYLMURAMIC ACID KINASE"/>
    <property type="match status" value="1"/>
</dbReference>
<dbReference type="Pfam" id="PF03702">
    <property type="entry name" value="AnmK"/>
    <property type="match status" value="1"/>
</dbReference>
<dbReference type="SUPFAM" id="SSF53067">
    <property type="entry name" value="Actin-like ATPase domain"/>
    <property type="match status" value="1"/>
</dbReference>
<proteinExistence type="inferred from homology"/>
<gene>
    <name evidence="1" type="primary">anmK2</name>
    <name type="ordered locus">Jann_3809</name>
</gene>